<proteinExistence type="inferred from homology"/>
<gene>
    <name type="primary">aroP</name>
    <name type="ordered locus">STM0150</name>
</gene>
<organism>
    <name type="scientific">Salmonella typhimurium (strain LT2 / SGSC1412 / ATCC 700720)</name>
    <dbReference type="NCBI Taxonomy" id="99287"/>
    <lineage>
        <taxon>Bacteria</taxon>
        <taxon>Pseudomonadati</taxon>
        <taxon>Pseudomonadota</taxon>
        <taxon>Gammaproteobacteria</taxon>
        <taxon>Enterobacterales</taxon>
        <taxon>Enterobacteriaceae</taxon>
        <taxon>Salmonella</taxon>
    </lineage>
</organism>
<reference key="1">
    <citation type="journal article" date="2001" name="Nature">
        <title>Complete genome sequence of Salmonella enterica serovar Typhimurium LT2.</title>
        <authorList>
            <person name="McClelland M."/>
            <person name="Sanderson K.E."/>
            <person name="Spieth J."/>
            <person name="Clifton S.W."/>
            <person name="Latreille P."/>
            <person name="Courtney L."/>
            <person name="Porwollik S."/>
            <person name="Ali J."/>
            <person name="Dante M."/>
            <person name="Du F."/>
            <person name="Hou S."/>
            <person name="Layman D."/>
            <person name="Leonard S."/>
            <person name="Nguyen C."/>
            <person name="Scott K."/>
            <person name="Holmes A."/>
            <person name="Grewal N."/>
            <person name="Mulvaney E."/>
            <person name="Ryan E."/>
            <person name="Sun H."/>
            <person name="Florea L."/>
            <person name="Miller W."/>
            <person name="Stoneking T."/>
            <person name="Nhan M."/>
            <person name="Waterston R."/>
            <person name="Wilson R.K."/>
        </authorList>
    </citation>
    <scope>NUCLEOTIDE SEQUENCE [LARGE SCALE GENOMIC DNA]</scope>
    <source>
        <strain>LT2 / SGSC1412 / ATCC 700720</strain>
    </source>
</reference>
<accession>P0CK99</accession>
<accession>P0A187</accession>
<accession>Q8Z9F1</accession>
<accession>Q9L4I0</accession>
<protein>
    <recommendedName>
        <fullName evidence="1">Aromatic amino acid transport protein AroP</fullName>
    </recommendedName>
    <alternativeName>
        <fullName evidence="1">Aromatic amino acid:H(+) symporter AroP</fullName>
    </alternativeName>
    <alternativeName>
        <fullName evidence="1">General aromatic amino acid permease</fullName>
    </alternativeName>
</protein>
<comment type="function">
    <text evidence="1">Permease that is involved in the active transport across the cytoplasmic membrane of all three aromatic amino acids, phenylalanine, tyrosine and tryptophan.</text>
</comment>
<comment type="catalytic activity">
    <reaction evidence="1">
        <text>L-phenylalanine(in) + H(+)(in) = L-phenylalanine(out) + H(+)(out)</text>
        <dbReference type="Rhea" id="RHEA:28923"/>
        <dbReference type="ChEBI" id="CHEBI:15378"/>
        <dbReference type="ChEBI" id="CHEBI:58095"/>
    </reaction>
    <physiologicalReaction direction="right-to-left" evidence="1">
        <dbReference type="Rhea" id="RHEA:28925"/>
    </physiologicalReaction>
</comment>
<comment type="catalytic activity">
    <reaction evidence="1">
        <text>L-tryptophan(in) + H(+)(in) = L-tryptophan(out) + H(+)(out)</text>
        <dbReference type="Rhea" id="RHEA:28879"/>
        <dbReference type="ChEBI" id="CHEBI:15378"/>
        <dbReference type="ChEBI" id="CHEBI:57912"/>
    </reaction>
    <physiologicalReaction direction="right-to-left" evidence="1">
        <dbReference type="Rhea" id="RHEA:28881"/>
    </physiologicalReaction>
</comment>
<comment type="catalytic activity">
    <reaction evidence="1">
        <text>L-tyrosine(in) + H(+)(in) = L-tyrosine(out) + H(+)(out)</text>
        <dbReference type="Rhea" id="RHEA:28875"/>
        <dbReference type="ChEBI" id="CHEBI:15378"/>
        <dbReference type="ChEBI" id="CHEBI:58315"/>
    </reaction>
    <physiologicalReaction direction="right-to-left" evidence="1">
        <dbReference type="Rhea" id="RHEA:28877"/>
    </physiologicalReaction>
</comment>
<comment type="subcellular location">
    <subcellularLocation>
        <location evidence="1">Cell inner membrane</location>
        <topology evidence="1">Multi-pass membrane protein</topology>
    </subcellularLocation>
</comment>
<comment type="similarity">
    <text evidence="3">Belongs to the amino acid-polyamine-organocation (APC) superfamily. Amino acid transporter (AAT) (TC 2.A.3.1) family.</text>
</comment>
<sequence length="457" mass="49874">MMDSQQHGEQLKRGLKNRHIQLIALGGAIGTGLFLGSASVIQSAGPGIILGYAIAGFIAFLIMRQLGEMVVEEPVAGSFSHFAYKYWGGFAGFASGWNYWVLYVLVAMAELTAVGKYIQFWYPEIPTWASAAAFFVIINAINLTNVKVFGEMEFWFAIIKVIAVIAMILFGAWLLFSDTAGPQATVRNLWEQGGFLPHGWTGLVMMMAIIMFSFGGLELVGITAAEADNPEQSIPKATNQVIYRILIFYIGSLAVLLSLLPWTRVTADTSPFVLIFHELGDTFVANALNIVVLTAALSVYNSCVYCNSRMLFGLAQQGNAPKALLNVDKRGVPVSSILVSAVVTALCVLLNYLAPESAFGLLMALVVSALVINWAMISLAHMMFRRAKQQQGVKTRFPALFYPFGNVLCLLFMAAVLIIMLMTPGMAISVWLIPVWLLILGVGYLCKEKTAKTVKAH</sequence>
<keyword id="KW-0029">Amino-acid transport</keyword>
<keyword id="KW-0997">Cell inner membrane</keyword>
<keyword id="KW-1003">Cell membrane</keyword>
<keyword id="KW-0472">Membrane</keyword>
<keyword id="KW-1185">Reference proteome</keyword>
<keyword id="KW-0812">Transmembrane</keyword>
<keyword id="KW-1133">Transmembrane helix</keyword>
<keyword id="KW-0813">Transport</keyword>
<feature type="chain" id="PRO_0000054197" description="Aromatic amino acid transport protein AroP">
    <location>
        <begin position="1"/>
        <end position="457"/>
    </location>
</feature>
<feature type="topological domain" description="Cytoplasmic" evidence="2">
    <location>
        <begin position="1"/>
        <end position="20"/>
    </location>
</feature>
<feature type="transmembrane region" description="Helical" evidence="2">
    <location>
        <begin position="21"/>
        <end position="41"/>
    </location>
</feature>
<feature type="topological domain" description="Periplasmic" evidence="2">
    <location>
        <position position="42"/>
    </location>
</feature>
<feature type="transmembrane region" description="Helical" evidence="2">
    <location>
        <begin position="43"/>
        <end position="63"/>
    </location>
</feature>
<feature type="topological domain" description="Cytoplasmic" evidence="2">
    <location>
        <begin position="64"/>
        <end position="86"/>
    </location>
</feature>
<feature type="transmembrane region" description="Helical" evidence="2">
    <location>
        <begin position="87"/>
        <end position="107"/>
    </location>
</feature>
<feature type="topological domain" description="Periplasmic" evidence="2">
    <location>
        <begin position="108"/>
        <end position="117"/>
    </location>
</feature>
<feature type="transmembrane region" description="Helical" evidence="2">
    <location>
        <begin position="118"/>
        <end position="138"/>
    </location>
</feature>
<feature type="topological domain" description="Cytoplasmic" evidence="2">
    <location>
        <begin position="139"/>
        <end position="155"/>
    </location>
</feature>
<feature type="transmembrane region" description="Helical" evidence="2">
    <location>
        <begin position="156"/>
        <end position="176"/>
    </location>
</feature>
<feature type="topological domain" description="Periplasmic" evidence="2">
    <location>
        <begin position="177"/>
        <end position="201"/>
    </location>
</feature>
<feature type="transmembrane region" description="Helical" evidence="2">
    <location>
        <begin position="202"/>
        <end position="222"/>
    </location>
</feature>
<feature type="topological domain" description="Cytoplasmic" evidence="2">
    <location>
        <begin position="223"/>
        <end position="240"/>
    </location>
</feature>
<feature type="transmembrane region" description="Helical" evidence="2">
    <location>
        <begin position="241"/>
        <end position="261"/>
    </location>
</feature>
<feature type="topological domain" description="Periplasmic" evidence="2">
    <location>
        <begin position="262"/>
        <end position="271"/>
    </location>
</feature>
<feature type="transmembrane region" description="Helical" evidence="2">
    <location>
        <begin position="272"/>
        <end position="292"/>
    </location>
</feature>
<feature type="topological domain" description="Cytoplasmic" evidence="2">
    <location>
        <begin position="293"/>
        <end position="333"/>
    </location>
</feature>
<feature type="transmembrane region" description="Helical" evidence="2">
    <location>
        <begin position="334"/>
        <end position="354"/>
    </location>
</feature>
<feature type="topological domain" description="Periplasmic" evidence="2">
    <location>
        <begin position="355"/>
        <end position="358"/>
    </location>
</feature>
<feature type="transmembrane region" description="Helical" evidence="2">
    <location>
        <begin position="359"/>
        <end position="379"/>
    </location>
</feature>
<feature type="topological domain" description="Cytoplasmic" evidence="2">
    <location>
        <begin position="380"/>
        <end position="400"/>
    </location>
</feature>
<feature type="transmembrane region" description="Helical" evidence="2">
    <location>
        <begin position="401"/>
        <end position="421"/>
    </location>
</feature>
<feature type="topological domain" description="Periplasmic" evidence="2">
    <location>
        <begin position="422"/>
        <end position="425"/>
    </location>
</feature>
<feature type="transmembrane region" description="Helical" evidence="2">
    <location>
        <begin position="426"/>
        <end position="446"/>
    </location>
</feature>
<feature type="topological domain" description="Cytoplasmic" evidence="2">
    <location>
        <begin position="447"/>
        <end position="457"/>
    </location>
</feature>
<dbReference type="EMBL" id="AE006468">
    <property type="protein sequence ID" value="AAL19114.1"/>
    <property type="molecule type" value="Genomic_DNA"/>
</dbReference>
<dbReference type="RefSeq" id="NP_459155.1">
    <property type="nucleotide sequence ID" value="NC_003197.2"/>
</dbReference>
<dbReference type="RefSeq" id="WP_000969487.1">
    <property type="nucleotide sequence ID" value="NC_003197.2"/>
</dbReference>
<dbReference type="SMR" id="P0CK99"/>
<dbReference type="STRING" id="99287.STM0150"/>
<dbReference type="PaxDb" id="99287-STM0150"/>
<dbReference type="GeneID" id="1251668"/>
<dbReference type="KEGG" id="stm:STM0150"/>
<dbReference type="PATRIC" id="fig|99287.12.peg.160"/>
<dbReference type="HOGENOM" id="CLU_007946_9_3_6"/>
<dbReference type="OMA" id="LFKALWY"/>
<dbReference type="PhylomeDB" id="P0CK99"/>
<dbReference type="BioCyc" id="SENT99287:STM0150-MONOMER"/>
<dbReference type="Proteomes" id="UP000001014">
    <property type="component" value="Chromosome"/>
</dbReference>
<dbReference type="GO" id="GO:0005886">
    <property type="term" value="C:plasma membrane"/>
    <property type="evidence" value="ECO:0007669"/>
    <property type="project" value="UniProtKB-SubCell"/>
</dbReference>
<dbReference type="GO" id="GO:0006865">
    <property type="term" value="P:amino acid transport"/>
    <property type="evidence" value="ECO:0007669"/>
    <property type="project" value="UniProtKB-KW"/>
</dbReference>
<dbReference type="GO" id="GO:0055085">
    <property type="term" value="P:transmembrane transport"/>
    <property type="evidence" value="ECO:0007669"/>
    <property type="project" value="InterPro"/>
</dbReference>
<dbReference type="FunFam" id="1.20.1740.10:FF:000001">
    <property type="entry name" value="Amino acid permease"/>
    <property type="match status" value="1"/>
</dbReference>
<dbReference type="Gene3D" id="1.20.1740.10">
    <property type="entry name" value="Amino acid/polyamine transporter I"/>
    <property type="match status" value="1"/>
</dbReference>
<dbReference type="InterPro" id="IPR004841">
    <property type="entry name" value="AA-permease/SLC12A_dom"/>
</dbReference>
<dbReference type="InterPro" id="IPR004840">
    <property type="entry name" value="Amino_acid_permease_CS"/>
</dbReference>
<dbReference type="NCBIfam" id="NF007594">
    <property type="entry name" value="PRK10238.1"/>
    <property type="match status" value="1"/>
</dbReference>
<dbReference type="PANTHER" id="PTHR43495:SF4">
    <property type="entry name" value="AROMATIC AMINO ACID TRANSPORT PROTEIN AROP"/>
    <property type="match status" value="1"/>
</dbReference>
<dbReference type="PANTHER" id="PTHR43495">
    <property type="entry name" value="GABA PERMEASE"/>
    <property type="match status" value="1"/>
</dbReference>
<dbReference type="Pfam" id="PF00324">
    <property type="entry name" value="AA_permease"/>
    <property type="match status" value="1"/>
</dbReference>
<dbReference type="PIRSF" id="PIRSF006060">
    <property type="entry name" value="AA_transporter"/>
    <property type="match status" value="1"/>
</dbReference>
<dbReference type="PROSITE" id="PS00218">
    <property type="entry name" value="AMINO_ACID_PERMEASE_1"/>
    <property type="match status" value="1"/>
</dbReference>
<name>AROP_SALTY</name>
<evidence type="ECO:0000250" key="1">
    <source>
        <dbReference type="UniProtKB" id="P15993"/>
    </source>
</evidence>
<evidence type="ECO:0000255" key="2"/>
<evidence type="ECO:0000305" key="3"/>